<keyword id="KW-1185">Reference proteome</keyword>
<sequence>MRLCLIPRNTGTPQRVLPPVVWSTPSRKKPVLSARNSMMFGHLSPMRIPHLRGKFNLQLPSLDEQVIPARLPKTEVRAEEPKEATEVKDQVETQEQEDNKRGPCSNGEAASTSRPLETQGNLTSSWYNPRPLEGNVHLKSLTEKNQTDKAQVHAVSFYSKGHGVASSHSPAGGILPFGRPDSLPTVLPAPVPGCSLWPEKAALKVLGKDYLPSSPGLLMVGEDMQPKDPAALGSSRSSPPKAAGHRSHKRKLSGPPLQLQPTPPLQLRWDRDEGPPPAKLPCLSPEALLVGQASQREGHLQQGNMHKNMRVLSRTSKFRRLRQLLRRRKKRRQGRCGGSRL</sequence>
<comment type="similarity">
    <text evidence="2">Belongs to the UPF0607 family.</text>
</comment>
<protein>
    <recommendedName>
        <fullName>Putative UPF0607 protein ENSP00000383144</fullName>
    </recommendedName>
</protein>
<feature type="chain" id="PRO_0000342527" description="Putative UPF0607 protein ENSP00000383144">
    <location>
        <begin position="1"/>
        <end position="341"/>
    </location>
</feature>
<feature type="region of interest" description="Disordered" evidence="1">
    <location>
        <begin position="70"/>
        <end position="131"/>
    </location>
</feature>
<feature type="region of interest" description="Disordered" evidence="1">
    <location>
        <begin position="218"/>
        <end position="279"/>
    </location>
</feature>
<feature type="compositionally biased region" description="Basic and acidic residues" evidence="1">
    <location>
        <begin position="72"/>
        <end position="101"/>
    </location>
</feature>
<feature type="compositionally biased region" description="Polar residues" evidence="1">
    <location>
        <begin position="108"/>
        <end position="127"/>
    </location>
</feature>
<feature type="compositionally biased region" description="Basic residues" evidence="1">
    <location>
        <begin position="243"/>
        <end position="252"/>
    </location>
</feature>
<accession>A8MX80</accession>
<reference key="1">
    <citation type="journal article" date="2004" name="Nature">
        <title>The DNA sequence and analysis of human chromosome 13.</title>
        <authorList>
            <person name="Dunham A."/>
            <person name="Matthews L.H."/>
            <person name="Burton J."/>
            <person name="Ashurst J.L."/>
            <person name="Howe K.L."/>
            <person name="Ashcroft K.J."/>
            <person name="Beare D.M."/>
            <person name="Burford D.C."/>
            <person name="Hunt S.E."/>
            <person name="Griffiths-Jones S."/>
            <person name="Jones M.C."/>
            <person name="Keenan S.J."/>
            <person name="Oliver K."/>
            <person name="Scott C.E."/>
            <person name="Ainscough R."/>
            <person name="Almeida J.P."/>
            <person name="Ambrose K.D."/>
            <person name="Andrews D.T."/>
            <person name="Ashwell R.I.S."/>
            <person name="Babbage A.K."/>
            <person name="Bagguley C.L."/>
            <person name="Bailey J."/>
            <person name="Bannerjee R."/>
            <person name="Barlow K.F."/>
            <person name="Bates K."/>
            <person name="Beasley H."/>
            <person name="Bird C.P."/>
            <person name="Bray-Allen S."/>
            <person name="Brown A.J."/>
            <person name="Brown J.Y."/>
            <person name="Burrill W."/>
            <person name="Carder C."/>
            <person name="Carter N.P."/>
            <person name="Chapman J.C."/>
            <person name="Clamp M.E."/>
            <person name="Clark S.Y."/>
            <person name="Clarke G."/>
            <person name="Clee C.M."/>
            <person name="Clegg S.C."/>
            <person name="Cobley V."/>
            <person name="Collins J.E."/>
            <person name="Corby N."/>
            <person name="Coville G.J."/>
            <person name="Deloukas P."/>
            <person name="Dhami P."/>
            <person name="Dunham I."/>
            <person name="Dunn M."/>
            <person name="Earthrowl M.E."/>
            <person name="Ellington A.G."/>
            <person name="Faulkner L."/>
            <person name="Frankish A.G."/>
            <person name="Frankland J."/>
            <person name="French L."/>
            <person name="Garner P."/>
            <person name="Garnett J."/>
            <person name="Gilbert J.G.R."/>
            <person name="Gilson C.J."/>
            <person name="Ghori J."/>
            <person name="Grafham D.V."/>
            <person name="Gribble S.M."/>
            <person name="Griffiths C."/>
            <person name="Hall R.E."/>
            <person name="Hammond S."/>
            <person name="Harley J.L."/>
            <person name="Hart E.A."/>
            <person name="Heath P.D."/>
            <person name="Howden P.J."/>
            <person name="Huckle E.J."/>
            <person name="Hunt P.J."/>
            <person name="Hunt A.R."/>
            <person name="Johnson C."/>
            <person name="Johnson D."/>
            <person name="Kay M."/>
            <person name="Kimberley A.M."/>
            <person name="King A."/>
            <person name="Laird G.K."/>
            <person name="Langford C.J."/>
            <person name="Lawlor S."/>
            <person name="Leongamornlert D.A."/>
            <person name="Lloyd D.M."/>
            <person name="Lloyd C."/>
            <person name="Loveland J.E."/>
            <person name="Lovell J."/>
            <person name="Martin S."/>
            <person name="Mashreghi-Mohammadi M."/>
            <person name="McLaren S.J."/>
            <person name="McMurray A."/>
            <person name="Milne S."/>
            <person name="Moore M.J.F."/>
            <person name="Nickerson T."/>
            <person name="Palmer S.A."/>
            <person name="Pearce A.V."/>
            <person name="Peck A.I."/>
            <person name="Pelan S."/>
            <person name="Phillimore B."/>
            <person name="Porter K.M."/>
            <person name="Rice C.M."/>
            <person name="Searle S."/>
            <person name="Sehra H.K."/>
            <person name="Shownkeen R."/>
            <person name="Skuce C.D."/>
            <person name="Smith M."/>
            <person name="Steward C.A."/>
            <person name="Sycamore N."/>
            <person name="Tester J."/>
            <person name="Thomas D.W."/>
            <person name="Tracey A."/>
            <person name="Tromans A."/>
            <person name="Tubby B."/>
            <person name="Wall M."/>
            <person name="Wallis J.M."/>
            <person name="West A.P."/>
            <person name="Whitehead S.L."/>
            <person name="Willey D.L."/>
            <person name="Wilming L."/>
            <person name="Wray P.W."/>
            <person name="Wright M.W."/>
            <person name="Young L."/>
            <person name="Coulson A."/>
            <person name="Durbin R.M."/>
            <person name="Hubbard T."/>
            <person name="Sulston J.E."/>
            <person name="Beck S."/>
            <person name="Bentley D.R."/>
            <person name="Rogers J."/>
            <person name="Ross M.T."/>
        </authorList>
    </citation>
    <scope>NUCLEOTIDE SEQUENCE [LARGE SCALE GENOMIC DNA]</scope>
</reference>
<name>YM017_HUMAN</name>
<dbReference type="EMBL" id="AL450447">
    <property type="status" value="NOT_ANNOTATED_CDS"/>
    <property type="molecule type" value="Genomic_DNA"/>
</dbReference>
<dbReference type="GlyGen" id="A8MX80">
    <property type="glycosylation" value="1 site"/>
</dbReference>
<dbReference type="iPTMnet" id="A8MX80"/>
<dbReference type="PhosphoSitePlus" id="A8MX80"/>
<dbReference type="BioMuta" id="-"/>
<dbReference type="jPOST" id="A8MX80"/>
<dbReference type="MassIVE" id="A8MX80"/>
<dbReference type="neXtProt" id="NX_A8MX80"/>
<dbReference type="InParanoid" id="A8MX80"/>
<dbReference type="PAN-GO" id="A8MX80">
    <property type="GO annotations" value="4 GO annotations based on evolutionary models"/>
</dbReference>
<dbReference type="Pharos" id="A8MX80">
    <property type="development level" value="Tdark"/>
</dbReference>
<dbReference type="PRO" id="PR:A8MX80"/>
<dbReference type="Proteomes" id="UP000005640">
    <property type="component" value="Unplaced"/>
</dbReference>
<dbReference type="RNAct" id="A8MX80">
    <property type="molecule type" value="protein"/>
</dbReference>
<dbReference type="InterPro" id="IPR043220">
    <property type="entry name" value="POM121-like_prot_1"/>
</dbReference>
<dbReference type="PANTHER" id="PTHR15566">
    <property type="entry name" value="POM121-LIKE"/>
    <property type="match status" value="1"/>
</dbReference>
<dbReference type="PANTHER" id="PTHR15566:SF7">
    <property type="entry name" value="UPF0607 PROTEIN ENSP00000332738-RELATED"/>
    <property type="match status" value="1"/>
</dbReference>
<dbReference type="Pfam" id="PF15229">
    <property type="entry name" value="POM121"/>
    <property type="match status" value="1"/>
</dbReference>
<proteinExistence type="inferred from homology"/>
<organism>
    <name type="scientific">Homo sapiens</name>
    <name type="common">Human</name>
    <dbReference type="NCBI Taxonomy" id="9606"/>
    <lineage>
        <taxon>Eukaryota</taxon>
        <taxon>Metazoa</taxon>
        <taxon>Chordata</taxon>
        <taxon>Craniata</taxon>
        <taxon>Vertebrata</taxon>
        <taxon>Euteleostomi</taxon>
        <taxon>Mammalia</taxon>
        <taxon>Eutheria</taxon>
        <taxon>Euarchontoglires</taxon>
        <taxon>Primates</taxon>
        <taxon>Haplorrhini</taxon>
        <taxon>Catarrhini</taxon>
        <taxon>Hominidae</taxon>
        <taxon>Homo</taxon>
    </lineage>
</organism>
<evidence type="ECO:0000256" key="1">
    <source>
        <dbReference type="SAM" id="MobiDB-lite"/>
    </source>
</evidence>
<evidence type="ECO:0000305" key="2"/>